<name>Y1199_SHESM</name>
<sequence length="187" mass="20665">MESLQNHFLIAMPSLDDTFFERTVIYLCEHDEKGAMGLVINKPLGIEVNSLLEQMDLPAEQVSTDLALGAQVLMGGPVSQDRGFVLHTSQPYWANSTELSSGLMLTTSRDVLTAIGSERSPEKFIVALGYAGWSKNQLEQELADNSWLTIPADQALLFDVKHEDRWQQASRALGFDAWQLSSQAGHA</sequence>
<accession>Q0HKY8</accession>
<protein>
    <recommendedName>
        <fullName evidence="1">UPF0301 protein Shewmr4_1199</fullName>
    </recommendedName>
</protein>
<proteinExistence type="inferred from homology"/>
<feature type="chain" id="PRO_1000046684" description="UPF0301 protein Shewmr4_1199">
    <location>
        <begin position="1"/>
        <end position="187"/>
    </location>
</feature>
<organism>
    <name type="scientific">Shewanella sp. (strain MR-4)</name>
    <dbReference type="NCBI Taxonomy" id="60480"/>
    <lineage>
        <taxon>Bacteria</taxon>
        <taxon>Pseudomonadati</taxon>
        <taxon>Pseudomonadota</taxon>
        <taxon>Gammaproteobacteria</taxon>
        <taxon>Alteromonadales</taxon>
        <taxon>Shewanellaceae</taxon>
        <taxon>Shewanella</taxon>
    </lineage>
</organism>
<evidence type="ECO:0000255" key="1">
    <source>
        <dbReference type="HAMAP-Rule" id="MF_00758"/>
    </source>
</evidence>
<gene>
    <name type="ordered locus">Shewmr4_1199</name>
</gene>
<dbReference type="EMBL" id="CP000446">
    <property type="protein sequence ID" value="ABI38279.1"/>
    <property type="molecule type" value="Genomic_DNA"/>
</dbReference>
<dbReference type="RefSeq" id="WP_011621987.1">
    <property type="nucleotide sequence ID" value="NC_008321.1"/>
</dbReference>
<dbReference type="SMR" id="Q0HKY8"/>
<dbReference type="KEGG" id="she:Shewmr4_1199"/>
<dbReference type="HOGENOM" id="CLU_057596_1_0_6"/>
<dbReference type="GO" id="GO:0005829">
    <property type="term" value="C:cytosol"/>
    <property type="evidence" value="ECO:0007669"/>
    <property type="project" value="TreeGrafter"/>
</dbReference>
<dbReference type="Gene3D" id="3.40.1740.10">
    <property type="entry name" value="VC0467-like"/>
    <property type="match status" value="1"/>
</dbReference>
<dbReference type="Gene3D" id="3.30.70.1300">
    <property type="entry name" value="VC0467-like domains"/>
    <property type="match status" value="1"/>
</dbReference>
<dbReference type="HAMAP" id="MF_00758">
    <property type="entry name" value="UPF0301"/>
    <property type="match status" value="1"/>
</dbReference>
<dbReference type="InterPro" id="IPR003774">
    <property type="entry name" value="AlgH-like"/>
</dbReference>
<dbReference type="NCBIfam" id="NF001266">
    <property type="entry name" value="PRK00228.1-1"/>
    <property type="match status" value="1"/>
</dbReference>
<dbReference type="PANTHER" id="PTHR30327">
    <property type="entry name" value="UNCHARACTERIZED PROTEIN YQGE"/>
    <property type="match status" value="1"/>
</dbReference>
<dbReference type="PANTHER" id="PTHR30327:SF1">
    <property type="entry name" value="UPF0301 PROTEIN YQGE"/>
    <property type="match status" value="1"/>
</dbReference>
<dbReference type="Pfam" id="PF02622">
    <property type="entry name" value="DUF179"/>
    <property type="match status" value="1"/>
</dbReference>
<dbReference type="SUPFAM" id="SSF143456">
    <property type="entry name" value="VC0467-like"/>
    <property type="match status" value="1"/>
</dbReference>
<comment type="similarity">
    <text evidence="1">Belongs to the UPF0301 (AlgH) family.</text>
</comment>
<reference key="1">
    <citation type="submission" date="2006-08" db="EMBL/GenBank/DDBJ databases">
        <title>Complete sequence of Shewanella sp. MR-4.</title>
        <authorList>
            <consortium name="US DOE Joint Genome Institute"/>
            <person name="Copeland A."/>
            <person name="Lucas S."/>
            <person name="Lapidus A."/>
            <person name="Barry K."/>
            <person name="Detter J.C."/>
            <person name="Glavina del Rio T."/>
            <person name="Hammon N."/>
            <person name="Israni S."/>
            <person name="Dalin E."/>
            <person name="Tice H."/>
            <person name="Pitluck S."/>
            <person name="Kiss H."/>
            <person name="Brettin T."/>
            <person name="Bruce D."/>
            <person name="Han C."/>
            <person name="Tapia R."/>
            <person name="Gilna P."/>
            <person name="Schmutz J."/>
            <person name="Larimer F."/>
            <person name="Land M."/>
            <person name="Hauser L."/>
            <person name="Kyrpides N."/>
            <person name="Mikhailova N."/>
            <person name="Nealson K."/>
            <person name="Konstantinidis K."/>
            <person name="Klappenbach J."/>
            <person name="Tiedje J."/>
            <person name="Richardson P."/>
        </authorList>
    </citation>
    <scope>NUCLEOTIDE SEQUENCE [LARGE SCALE GENOMIC DNA]</scope>
    <source>
        <strain>MR-4</strain>
    </source>
</reference>